<protein>
    <recommendedName>
        <fullName>Receptor-like serine/threonine-protein kinase NCRK</fullName>
        <ecNumber>2.7.11.1</ecNumber>
    </recommendedName>
</protein>
<proteinExistence type="evidence at protein level"/>
<feature type="signal peptide" evidence="2">
    <location>
        <begin position="1"/>
        <end position="23"/>
    </location>
</feature>
<feature type="chain" id="PRO_0000403329" description="Receptor-like serine/threonine-protein kinase NCRK">
    <location>
        <begin position="24"/>
        <end position="565"/>
    </location>
</feature>
<feature type="topological domain" description="Extracellular" evidence="2">
    <location>
        <begin position="24"/>
        <end position="103"/>
    </location>
</feature>
<feature type="transmembrane region" description="Helical" evidence="2">
    <location>
        <begin position="104"/>
        <end position="124"/>
    </location>
</feature>
<feature type="topological domain" description="Cytoplasmic" evidence="2">
    <location>
        <begin position="125"/>
        <end position="565"/>
    </location>
</feature>
<feature type="domain" description="Protein kinase" evidence="3">
    <location>
        <begin position="210"/>
        <end position="495"/>
    </location>
</feature>
<feature type="active site" description="Proton acceptor" evidence="3 4">
    <location>
        <position position="339"/>
    </location>
</feature>
<feature type="binding site" evidence="3">
    <location>
        <begin position="216"/>
        <end position="224"/>
    </location>
    <ligand>
        <name>ATP</name>
        <dbReference type="ChEBI" id="CHEBI:30616"/>
    </ligand>
</feature>
<feature type="binding site" evidence="3">
    <location>
        <position position="238"/>
    </location>
    <ligand>
        <name>ATP</name>
        <dbReference type="ChEBI" id="CHEBI:30616"/>
    </ligand>
</feature>
<feature type="modified residue" description="Phosphothreonine" evidence="1">
    <location>
        <position position="378"/>
    </location>
</feature>
<feature type="modified residue" description="Phosphothreonine" evidence="1">
    <location>
        <position position="383"/>
    </location>
</feature>
<feature type="modified residue" description="Phosphotyrosine" evidence="1">
    <location>
        <position position="391"/>
    </location>
</feature>
<feature type="glycosylation site" description="N-linked (GlcNAc...) asparagine" evidence="2">
    <location>
        <position position="27"/>
    </location>
</feature>
<feature type="glycosylation site" description="N-linked (GlcNAc...) asparagine" evidence="2">
    <location>
        <position position="37"/>
    </location>
</feature>
<feature type="glycosylation site" description="N-linked (GlcNAc...) asparagine" evidence="2">
    <location>
        <position position="45"/>
    </location>
</feature>
<feature type="glycosylation site" description="N-linked (GlcNAc...) asparagine" evidence="2">
    <location>
        <position position="77"/>
    </location>
</feature>
<feature type="glycosylation site" description="N-linked (GlcNAc...) asparagine" evidence="2">
    <location>
        <position position="85"/>
    </location>
</feature>
<dbReference type="EC" id="2.7.11.1"/>
<dbReference type="EMBL" id="AC006202">
    <property type="protein sequence ID" value="AAD29828.1"/>
    <property type="status" value="ALT_SEQ"/>
    <property type="molecule type" value="Genomic_DNA"/>
</dbReference>
<dbReference type="EMBL" id="CP002685">
    <property type="protein sequence ID" value="AEC08095.1"/>
    <property type="molecule type" value="Genomic_DNA"/>
</dbReference>
<dbReference type="EMBL" id="CP002685">
    <property type="protein sequence ID" value="AEC08096.1"/>
    <property type="molecule type" value="Genomic_DNA"/>
</dbReference>
<dbReference type="EMBL" id="CP002685">
    <property type="protein sequence ID" value="ANM61520.1"/>
    <property type="molecule type" value="Genomic_DNA"/>
</dbReference>
<dbReference type="EMBL" id="CP002685">
    <property type="protein sequence ID" value="ANM61521.1"/>
    <property type="molecule type" value="Genomic_DNA"/>
</dbReference>
<dbReference type="EMBL" id="CP002685">
    <property type="protein sequence ID" value="ANM61522.1"/>
    <property type="molecule type" value="Genomic_DNA"/>
</dbReference>
<dbReference type="EMBL" id="CP002685">
    <property type="protein sequence ID" value="ANM61523.1"/>
    <property type="molecule type" value="Genomic_DNA"/>
</dbReference>
<dbReference type="EMBL" id="AY065457">
    <property type="protein sequence ID" value="AAL38898.1"/>
    <property type="molecule type" value="mRNA"/>
</dbReference>
<dbReference type="EMBL" id="BT004417">
    <property type="protein sequence ID" value="AAO42411.1"/>
    <property type="molecule type" value="mRNA"/>
</dbReference>
<dbReference type="EMBL" id="AK226256">
    <property type="protein sequence ID" value="BAE98417.1"/>
    <property type="molecule type" value="mRNA"/>
</dbReference>
<dbReference type="PIR" id="F84682">
    <property type="entry name" value="F84682"/>
</dbReference>
<dbReference type="RefSeq" id="NP_001031435.1">
    <property type="nucleotide sequence ID" value="NM_001036358.2"/>
</dbReference>
<dbReference type="RefSeq" id="NP_001323735.1">
    <property type="nucleotide sequence ID" value="NM_001336153.1"/>
</dbReference>
<dbReference type="RefSeq" id="NP_001323736.1">
    <property type="nucleotide sequence ID" value="NM_001336154.1"/>
</dbReference>
<dbReference type="RefSeq" id="NP_001323737.1">
    <property type="nucleotide sequence ID" value="NM_001336155.1"/>
</dbReference>
<dbReference type="RefSeq" id="NP_001323738.1">
    <property type="nucleotide sequence ID" value="NM_001336156.1"/>
</dbReference>
<dbReference type="RefSeq" id="NP_850115.1">
    <property type="nucleotide sequence ID" value="NM_179784.2"/>
</dbReference>
<dbReference type="SMR" id="Q8VYY5"/>
<dbReference type="BioGRID" id="2721">
    <property type="interactions" value="2"/>
</dbReference>
<dbReference type="FunCoup" id="Q8VYY5">
    <property type="interactions" value="785"/>
</dbReference>
<dbReference type="IntAct" id="Q8VYY5">
    <property type="interactions" value="1"/>
</dbReference>
<dbReference type="STRING" id="3702.Q8VYY5"/>
<dbReference type="GlyCosmos" id="Q8VYY5">
    <property type="glycosylation" value="5 sites, No reported glycans"/>
</dbReference>
<dbReference type="GlyGen" id="Q8VYY5">
    <property type="glycosylation" value="5 sites"/>
</dbReference>
<dbReference type="iPTMnet" id="Q8VYY5"/>
<dbReference type="PaxDb" id="3702-AT2G28250.1"/>
<dbReference type="ProteomicsDB" id="251051"/>
<dbReference type="EnsemblPlants" id="AT2G28250.1">
    <property type="protein sequence ID" value="AT2G28250.1"/>
    <property type="gene ID" value="AT2G28250"/>
</dbReference>
<dbReference type="EnsemblPlants" id="AT2G28250.2">
    <property type="protein sequence ID" value="AT2G28250.2"/>
    <property type="gene ID" value="AT2G28250"/>
</dbReference>
<dbReference type="EnsemblPlants" id="AT2G28250.3">
    <property type="protein sequence ID" value="AT2G28250.3"/>
    <property type="gene ID" value="AT2G28250"/>
</dbReference>
<dbReference type="EnsemblPlants" id="AT2G28250.4">
    <property type="protein sequence ID" value="AT2G28250.4"/>
    <property type="gene ID" value="AT2G28250"/>
</dbReference>
<dbReference type="EnsemblPlants" id="AT2G28250.5">
    <property type="protein sequence ID" value="AT2G28250.5"/>
    <property type="gene ID" value="AT2G28250"/>
</dbReference>
<dbReference type="EnsemblPlants" id="AT2G28250.6">
    <property type="protein sequence ID" value="AT2G28250.6"/>
    <property type="gene ID" value="AT2G28250"/>
</dbReference>
<dbReference type="GeneID" id="817371"/>
<dbReference type="Gramene" id="AT2G28250.1">
    <property type="protein sequence ID" value="AT2G28250.1"/>
    <property type="gene ID" value="AT2G28250"/>
</dbReference>
<dbReference type="Gramene" id="AT2G28250.2">
    <property type="protein sequence ID" value="AT2G28250.2"/>
    <property type="gene ID" value="AT2G28250"/>
</dbReference>
<dbReference type="Gramene" id="AT2G28250.3">
    <property type="protein sequence ID" value="AT2G28250.3"/>
    <property type="gene ID" value="AT2G28250"/>
</dbReference>
<dbReference type="Gramene" id="AT2G28250.4">
    <property type="protein sequence ID" value="AT2G28250.4"/>
    <property type="gene ID" value="AT2G28250"/>
</dbReference>
<dbReference type="Gramene" id="AT2G28250.5">
    <property type="protein sequence ID" value="AT2G28250.5"/>
    <property type="gene ID" value="AT2G28250"/>
</dbReference>
<dbReference type="Gramene" id="AT2G28250.6">
    <property type="protein sequence ID" value="AT2G28250.6"/>
    <property type="gene ID" value="AT2G28250"/>
</dbReference>
<dbReference type="KEGG" id="ath:AT2G28250"/>
<dbReference type="Araport" id="AT2G28250"/>
<dbReference type="TAIR" id="AT2G28250">
    <property type="gene designation" value="NCRK"/>
</dbReference>
<dbReference type="eggNOG" id="KOG1187">
    <property type="taxonomic scope" value="Eukaryota"/>
</dbReference>
<dbReference type="HOGENOM" id="CLU_000288_161_1_1"/>
<dbReference type="InParanoid" id="Q8VYY5"/>
<dbReference type="OMA" id="SKVGWSR"/>
<dbReference type="PhylomeDB" id="Q8VYY5"/>
<dbReference type="PRO" id="PR:Q8VYY5"/>
<dbReference type="Proteomes" id="UP000006548">
    <property type="component" value="Chromosome 2"/>
</dbReference>
<dbReference type="ExpressionAtlas" id="Q8VYY5">
    <property type="expression patterns" value="baseline and differential"/>
</dbReference>
<dbReference type="GO" id="GO:0012505">
    <property type="term" value="C:endomembrane system"/>
    <property type="evidence" value="ECO:0000314"/>
    <property type="project" value="TAIR"/>
</dbReference>
<dbReference type="GO" id="GO:0005768">
    <property type="term" value="C:endosome"/>
    <property type="evidence" value="ECO:0000314"/>
    <property type="project" value="TAIR"/>
</dbReference>
<dbReference type="GO" id="GO:0010008">
    <property type="term" value="C:endosome membrane"/>
    <property type="evidence" value="ECO:0000314"/>
    <property type="project" value="UniProtKB"/>
</dbReference>
<dbReference type="GO" id="GO:0005886">
    <property type="term" value="C:plasma membrane"/>
    <property type="evidence" value="ECO:0000314"/>
    <property type="project" value="UniProtKB"/>
</dbReference>
<dbReference type="GO" id="GO:0005524">
    <property type="term" value="F:ATP binding"/>
    <property type="evidence" value="ECO:0007669"/>
    <property type="project" value="UniProtKB-KW"/>
</dbReference>
<dbReference type="GO" id="GO:0051020">
    <property type="term" value="F:GTPase binding"/>
    <property type="evidence" value="ECO:0000353"/>
    <property type="project" value="UniProtKB"/>
</dbReference>
<dbReference type="GO" id="GO:0106310">
    <property type="term" value="F:protein serine kinase activity"/>
    <property type="evidence" value="ECO:0007669"/>
    <property type="project" value="RHEA"/>
</dbReference>
<dbReference type="GO" id="GO:0004674">
    <property type="term" value="F:protein serine/threonine kinase activity"/>
    <property type="evidence" value="ECO:0007669"/>
    <property type="project" value="UniProtKB-KW"/>
</dbReference>
<dbReference type="GO" id="GO:0010089">
    <property type="term" value="P:xylem development"/>
    <property type="evidence" value="ECO:0000314"/>
    <property type="project" value="TAIR"/>
</dbReference>
<dbReference type="CDD" id="cd14066">
    <property type="entry name" value="STKc_IRAK"/>
    <property type="match status" value="1"/>
</dbReference>
<dbReference type="FunFam" id="1.10.510.10:FF:000395">
    <property type="entry name" value="receptor-like serine/threonine-protein kinase NCRK"/>
    <property type="match status" value="1"/>
</dbReference>
<dbReference type="FunFam" id="3.30.200.20:FF:000415">
    <property type="entry name" value="receptor-like serine/threonine-protein kinase NCRK"/>
    <property type="match status" value="1"/>
</dbReference>
<dbReference type="Gene3D" id="3.30.200.20">
    <property type="entry name" value="Phosphorylase Kinase, domain 1"/>
    <property type="match status" value="1"/>
</dbReference>
<dbReference type="Gene3D" id="1.10.510.10">
    <property type="entry name" value="Transferase(Phosphotransferase) domain 1"/>
    <property type="match status" value="1"/>
</dbReference>
<dbReference type="InterPro" id="IPR011009">
    <property type="entry name" value="Kinase-like_dom_sf"/>
</dbReference>
<dbReference type="InterPro" id="IPR000719">
    <property type="entry name" value="Prot_kinase_dom"/>
</dbReference>
<dbReference type="InterPro" id="IPR017441">
    <property type="entry name" value="Protein_kinase_ATP_BS"/>
</dbReference>
<dbReference type="InterPro" id="IPR008271">
    <property type="entry name" value="Ser/Thr_kinase_AS"/>
</dbReference>
<dbReference type="PANTHER" id="PTHR47989">
    <property type="entry name" value="OS01G0750732 PROTEIN"/>
    <property type="match status" value="1"/>
</dbReference>
<dbReference type="PANTHER" id="PTHR47989:SF23">
    <property type="entry name" value="RECEPTOR-LIKE SERINE_THREONINE-PROTEIN KINASE NCRK ISOFORM X1"/>
    <property type="match status" value="1"/>
</dbReference>
<dbReference type="Pfam" id="PF00069">
    <property type="entry name" value="Pkinase"/>
    <property type="match status" value="1"/>
</dbReference>
<dbReference type="SMART" id="SM00220">
    <property type="entry name" value="S_TKc"/>
    <property type="match status" value="1"/>
</dbReference>
<dbReference type="SUPFAM" id="SSF56112">
    <property type="entry name" value="Protein kinase-like (PK-like)"/>
    <property type="match status" value="1"/>
</dbReference>
<dbReference type="PROSITE" id="PS00107">
    <property type="entry name" value="PROTEIN_KINASE_ATP"/>
    <property type="match status" value="1"/>
</dbReference>
<dbReference type="PROSITE" id="PS50011">
    <property type="entry name" value="PROTEIN_KINASE_DOM"/>
    <property type="match status" value="1"/>
</dbReference>
<dbReference type="PROSITE" id="PS00108">
    <property type="entry name" value="PROTEIN_KINASE_ST"/>
    <property type="match status" value="1"/>
</dbReference>
<keyword id="KW-0067">ATP-binding</keyword>
<keyword id="KW-1003">Cell membrane</keyword>
<keyword id="KW-0967">Endosome</keyword>
<keyword id="KW-0325">Glycoprotein</keyword>
<keyword id="KW-0418">Kinase</keyword>
<keyword id="KW-0472">Membrane</keyword>
<keyword id="KW-0547">Nucleotide-binding</keyword>
<keyword id="KW-0597">Phosphoprotein</keyword>
<keyword id="KW-0675">Receptor</keyword>
<keyword id="KW-1185">Reference proteome</keyword>
<keyword id="KW-0723">Serine/threonine-protein kinase</keyword>
<keyword id="KW-0732">Signal</keyword>
<keyword id="KW-0808">Transferase</keyword>
<keyword id="KW-0812">Transmembrane</keyword>
<keyword id="KW-1133">Transmembrane helix</keyword>
<accession>Q8VYY5</accession>
<accession>Q0WWT1</accession>
<accession>Q9SL30</accession>
<name>NCRK_ARATH</name>
<reference key="1">
    <citation type="journal article" date="1999" name="Nature">
        <title>Sequence and analysis of chromosome 2 of the plant Arabidopsis thaliana.</title>
        <authorList>
            <person name="Lin X."/>
            <person name="Kaul S."/>
            <person name="Rounsley S.D."/>
            <person name="Shea T.P."/>
            <person name="Benito M.-I."/>
            <person name="Town C.D."/>
            <person name="Fujii C.Y."/>
            <person name="Mason T.M."/>
            <person name="Bowman C.L."/>
            <person name="Barnstead M.E."/>
            <person name="Feldblyum T.V."/>
            <person name="Buell C.R."/>
            <person name="Ketchum K.A."/>
            <person name="Lee J.J."/>
            <person name="Ronning C.M."/>
            <person name="Koo H.L."/>
            <person name="Moffat K.S."/>
            <person name="Cronin L.A."/>
            <person name="Shen M."/>
            <person name="Pai G."/>
            <person name="Van Aken S."/>
            <person name="Umayam L."/>
            <person name="Tallon L.J."/>
            <person name="Gill J.E."/>
            <person name="Adams M.D."/>
            <person name="Carrera A.J."/>
            <person name="Creasy T.H."/>
            <person name="Goodman H.M."/>
            <person name="Somerville C.R."/>
            <person name="Copenhaver G.P."/>
            <person name="Preuss D."/>
            <person name="Nierman W.C."/>
            <person name="White O."/>
            <person name="Eisen J.A."/>
            <person name="Salzberg S.L."/>
            <person name="Fraser C.M."/>
            <person name="Venter J.C."/>
        </authorList>
    </citation>
    <scope>NUCLEOTIDE SEQUENCE [LARGE SCALE GENOMIC DNA]</scope>
    <source>
        <strain>cv. Columbia</strain>
    </source>
</reference>
<reference key="2">
    <citation type="journal article" date="2017" name="Plant J.">
        <title>Araport11: a complete reannotation of the Arabidopsis thaliana reference genome.</title>
        <authorList>
            <person name="Cheng C.Y."/>
            <person name="Krishnakumar V."/>
            <person name="Chan A.P."/>
            <person name="Thibaud-Nissen F."/>
            <person name="Schobel S."/>
            <person name="Town C.D."/>
        </authorList>
    </citation>
    <scope>GENOME REANNOTATION</scope>
    <source>
        <strain>cv. Columbia</strain>
    </source>
</reference>
<reference key="3">
    <citation type="journal article" date="2003" name="Science">
        <title>Empirical analysis of transcriptional activity in the Arabidopsis genome.</title>
        <authorList>
            <person name="Yamada K."/>
            <person name="Lim J."/>
            <person name="Dale J.M."/>
            <person name="Chen H."/>
            <person name="Shinn P."/>
            <person name="Palm C.J."/>
            <person name="Southwick A.M."/>
            <person name="Wu H.C."/>
            <person name="Kim C.J."/>
            <person name="Nguyen M."/>
            <person name="Pham P.K."/>
            <person name="Cheuk R.F."/>
            <person name="Karlin-Newmann G."/>
            <person name="Liu S.X."/>
            <person name="Lam B."/>
            <person name="Sakano H."/>
            <person name="Wu T."/>
            <person name="Yu G."/>
            <person name="Miranda M."/>
            <person name="Quach H.L."/>
            <person name="Tripp M."/>
            <person name="Chang C.H."/>
            <person name="Lee J.M."/>
            <person name="Toriumi M.J."/>
            <person name="Chan M.M."/>
            <person name="Tang C.C."/>
            <person name="Onodera C.S."/>
            <person name="Deng J.M."/>
            <person name="Akiyama K."/>
            <person name="Ansari Y."/>
            <person name="Arakawa T."/>
            <person name="Banh J."/>
            <person name="Banno F."/>
            <person name="Bowser L."/>
            <person name="Brooks S.Y."/>
            <person name="Carninci P."/>
            <person name="Chao Q."/>
            <person name="Choy N."/>
            <person name="Enju A."/>
            <person name="Goldsmith A.D."/>
            <person name="Gurjal M."/>
            <person name="Hansen N.F."/>
            <person name="Hayashizaki Y."/>
            <person name="Johnson-Hopson C."/>
            <person name="Hsuan V.W."/>
            <person name="Iida K."/>
            <person name="Karnes M."/>
            <person name="Khan S."/>
            <person name="Koesema E."/>
            <person name="Ishida J."/>
            <person name="Jiang P.X."/>
            <person name="Jones T."/>
            <person name="Kawai J."/>
            <person name="Kamiya A."/>
            <person name="Meyers C."/>
            <person name="Nakajima M."/>
            <person name="Narusaka M."/>
            <person name="Seki M."/>
            <person name="Sakurai T."/>
            <person name="Satou M."/>
            <person name="Tamse R."/>
            <person name="Vaysberg M."/>
            <person name="Wallender E.K."/>
            <person name="Wong C."/>
            <person name="Yamamura Y."/>
            <person name="Yuan S."/>
            <person name="Shinozaki K."/>
            <person name="Davis R.W."/>
            <person name="Theologis A."/>
            <person name="Ecker J.R."/>
        </authorList>
    </citation>
    <scope>NUCLEOTIDE SEQUENCE [LARGE SCALE MRNA]</scope>
    <source>
        <strain>cv. Columbia</strain>
    </source>
</reference>
<reference key="4">
    <citation type="submission" date="2006-07" db="EMBL/GenBank/DDBJ databases">
        <title>Large-scale analysis of RIKEN Arabidopsis full-length (RAFL) cDNAs.</title>
        <authorList>
            <person name="Totoki Y."/>
            <person name="Seki M."/>
            <person name="Ishida J."/>
            <person name="Nakajima M."/>
            <person name="Enju A."/>
            <person name="Kamiya A."/>
            <person name="Narusaka M."/>
            <person name="Shin-i T."/>
            <person name="Nakagawa M."/>
            <person name="Sakamoto N."/>
            <person name="Oishi K."/>
            <person name="Kohara Y."/>
            <person name="Kobayashi M."/>
            <person name="Toyoda A."/>
            <person name="Sakaki Y."/>
            <person name="Sakurai T."/>
            <person name="Iida K."/>
            <person name="Akiyama K."/>
            <person name="Satou M."/>
            <person name="Toyoda T."/>
            <person name="Konagaya A."/>
            <person name="Carninci P."/>
            <person name="Kawai J."/>
            <person name="Hayashizaki Y."/>
            <person name="Shinozaki K."/>
        </authorList>
    </citation>
    <scope>NUCLEOTIDE SEQUENCE [LARGE SCALE MRNA] OF 254-565</scope>
    <source>
        <strain>cv. Columbia</strain>
    </source>
</reference>
<reference key="5">
    <citation type="journal article" date="2008" name="Plant J.">
        <title>A cysteine-rich receptor-like kinase NCRK and a pathogen-induced protein kinase RBK1 are Rop GTPase interactors.</title>
        <authorList>
            <person name="Molendijk A.J."/>
            <person name="Ruperti B."/>
            <person name="Singh M.K."/>
            <person name="Dovzhenko A."/>
            <person name="Ditengou F.A."/>
            <person name="Milia M."/>
            <person name="Westphal L."/>
            <person name="Rosahl S."/>
            <person name="Soellick T.R."/>
            <person name="Uhrig J."/>
            <person name="Weingarten L."/>
            <person name="Huber M."/>
            <person name="Palme K."/>
        </authorList>
    </citation>
    <scope>INTERACTION WITH ARAC5</scope>
    <scope>SUBCELLULAR LOCATION</scope>
    <scope>PHOSPHORYLATION</scope>
    <scope>TISSUE SPECIFICITY</scope>
</reference>
<organism>
    <name type="scientific">Arabidopsis thaliana</name>
    <name type="common">Mouse-ear cress</name>
    <dbReference type="NCBI Taxonomy" id="3702"/>
    <lineage>
        <taxon>Eukaryota</taxon>
        <taxon>Viridiplantae</taxon>
        <taxon>Streptophyta</taxon>
        <taxon>Embryophyta</taxon>
        <taxon>Tracheophyta</taxon>
        <taxon>Spermatophyta</taxon>
        <taxon>Magnoliopsida</taxon>
        <taxon>eudicotyledons</taxon>
        <taxon>Gunneridae</taxon>
        <taxon>Pentapetalae</taxon>
        <taxon>rosids</taxon>
        <taxon>malvids</taxon>
        <taxon>Brassicales</taxon>
        <taxon>Brassicaceae</taxon>
        <taxon>Camelineae</taxon>
        <taxon>Arabidopsis</taxon>
    </lineage>
</organism>
<evidence type="ECO:0000250" key="1">
    <source>
        <dbReference type="UniProtKB" id="O48814"/>
    </source>
</evidence>
<evidence type="ECO:0000255" key="2"/>
<evidence type="ECO:0000255" key="3">
    <source>
        <dbReference type="PROSITE-ProRule" id="PRU00159"/>
    </source>
</evidence>
<evidence type="ECO:0000255" key="4">
    <source>
        <dbReference type="PROSITE-ProRule" id="PRU10027"/>
    </source>
</evidence>
<evidence type="ECO:0000269" key="5">
    <source>
    </source>
</evidence>
<evidence type="ECO:0000305" key="6"/>
<comment type="catalytic activity">
    <reaction>
        <text>L-seryl-[protein] + ATP = O-phospho-L-seryl-[protein] + ADP + H(+)</text>
        <dbReference type="Rhea" id="RHEA:17989"/>
        <dbReference type="Rhea" id="RHEA-COMP:9863"/>
        <dbReference type="Rhea" id="RHEA-COMP:11604"/>
        <dbReference type="ChEBI" id="CHEBI:15378"/>
        <dbReference type="ChEBI" id="CHEBI:29999"/>
        <dbReference type="ChEBI" id="CHEBI:30616"/>
        <dbReference type="ChEBI" id="CHEBI:83421"/>
        <dbReference type="ChEBI" id="CHEBI:456216"/>
        <dbReference type="EC" id="2.7.11.1"/>
    </reaction>
</comment>
<comment type="catalytic activity">
    <reaction>
        <text>L-threonyl-[protein] + ATP = O-phospho-L-threonyl-[protein] + ADP + H(+)</text>
        <dbReference type="Rhea" id="RHEA:46608"/>
        <dbReference type="Rhea" id="RHEA-COMP:11060"/>
        <dbReference type="Rhea" id="RHEA-COMP:11605"/>
        <dbReference type="ChEBI" id="CHEBI:15378"/>
        <dbReference type="ChEBI" id="CHEBI:30013"/>
        <dbReference type="ChEBI" id="CHEBI:30616"/>
        <dbReference type="ChEBI" id="CHEBI:61977"/>
        <dbReference type="ChEBI" id="CHEBI:456216"/>
        <dbReference type="EC" id="2.7.11.1"/>
    </reaction>
</comment>
<comment type="subunit">
    <text evidence="5">Interacts with ARAC5.</text>
</comment>
<comment type="subcellular location">
    <subcellularLocation>
        <location evidence="5">Cell membrane</location>
        <topology evidence="5">Single-pass type I membrane protein</topology>
    </subcellularLocation>
    <subcellularLocation>
        <location evidence="5">Prevacuolar compartment membrane</location>
    </subcellularLocation>
    <subcellularLocation>
        <location evidence="5">Endosome</location>
    </subcellularLocation>
</comment>
<comment type="tissue specificity">
    <text evidence="5">Mostly expressed in leaf primordia, root and shoot apical meristems, lateral root primordia, and stele of older roots and hypocotyls. In leaves and cotyledons, highest levels observed in trichomes, vasculatures, and hydathode endothem.</text>
</comment>
<comment type="PTM">
    <text evidence="5">Phosphorylated.</text>
</comment>
<comment type="similarity">
    <text evidence="3">Belongs to the protein kinase superfamily. Ser/Thr protein kinase family.</text>
</comment>
<comment type="sequence caution" evidence="6">
    <conflict type="erroneous gene model prediction">
        <sequence resource="EMBL-CDS" id="AAD29828"/>
    </conflict>
</comment>
<sequence length="565" mass="62192">MKMRVETALAILLVLISIQQCYGGVSNYTCTCFSSGNRSDILESNCSTSCNCRPDRDQWVCLCPANGFPVIAIGGSNSSCFTSCNCSAGATKSSKKQYLSRKLVIVILLFCGVLISLAFLASMICYICRKDKFSGQTPSVSSDRESSWHSSANLINRKSSVSQSKISISSSVAGCFFQNASLFCVSKPETIHGAIFQFSYTELEQATNKFSSNSVIGHGGSSCVYRGQLKDGKTAAIKRLNTPKGDDTDTLFSTEVELLSRLHHYHVVPLIGYCSEFHGKHAERLLVFEYMSYGSLRDCLDGELGEKMTWNIRISVALGAARGLEYLHEAAAPRILHRDVKSTNILLDENWHAKITDLGMAKCLSSDGLQSGSSSPTTGLQGTFGYFAPEYAIAGCASQMSDVFSFGVVLLELITGRKPIQKPSNNKGEESLVIWAVPRLQDSKRVIEELPDPRLNGKFAEEEMQIMAYLAKECLLLDPESRPTMREVVQILSTITPDTSSRRRNFPINYLFQSNEKKKESKVGWSRGGSKSGQEEETVDLTEPRFESFCLPNVKPVLLEPSAHI</sequence>
<gene>
    <name type="primary">NCRK</name>
    <name type="ordered locus">At2g28250</name>
    <name type="ORF">T3B23.8</name>
</gene>